<name>PSBN_PHAAO</name>
<accession>Q3BAK9</accession>
<comment type="function">
    <text evidence="1">May play a role in photosystem I and II biogenesis.</text>
</comment>
<comment type="subcellular location">
    <subcellularLocation>
        <location evidence="1">Plastid</location>
        <location evidence="1">Chloroplast thylakoid membrane</location>
        <topology evidence="1">Single-pass membrane protein</topology>
    </subcellularLocation>
</comment>
<comment type="similarity">
    <text evidence="1">Belongs to the PsbN family.</text>
</comment>
<comment type="caution">
    <text evidence="1">Originally thought to be a component of PSII; based on experiments in Synechocystis, N.tabacum and barley, and its absence from PSII in T.elongatus and T.vulcanus, this is probably not true.</text>
</comment>
<organism>
    <name type="scientific">Phalaenopsis aphrodite subsp. formosana</name>
    <name type="common">Moth orchid</name>
    <dbReference type="NCBI Taxonomy" id="308872"/>
    <lineage>
        <taxon>Eukaryota</taxon>
        <taxon>Viridiplantae</taxon>
        <taxon>Streptophyta</taxon>
        <taxon>Embryophyta</taxon>
        <taxon>Tracheophyta</taxon>
        <taxon>Spermatophyta</taxon>
        <taxon>Magnoliopsida</taxon>
        <taxon>Liliopsida</taxon>
        <taxon>Asparagales</taxon>
        <taxon>Orchidaceae</taxon>
        <taxon>Epidendroideae</taxon>
        <taxon>Vandeae</taxon>
        <taxon>Aeridinae</taxon>
        <taxon>Phalaenopsis</taxon>
    </lineage>
</organism>
<dbReference type="EMBL" id="AY916449">
    <property type="protein sequence ID" value="AAW82527.1"/>
    <property type="molecule type" value="Genomic_DNA"/>
</dbReference>
<dbReference type="RefSeq" id="YP_358609.1">
    <property type="nucleotide sequence ID" value="NC_007499.1"/>
</dbReference>
<dbReference type="SMR" id="Q3BAK9"/>
<dbReference type="GeneID" id="3741708"/>
<dbReference type="GO" id="GO:0009535">
    <property type="term" value="C:chloroplast thylakoid membrane"/>
    <property type="evidence" value="ECO:0007669"/>
    <property type="project" value="UniProtKB-SubCell"/>
</dbReference>
<dbReference type="GO" id="GO:0015979">
    <property type="term" value="P:photosynthesis"/>
    <property type="evidence" value="ECO:0007669"/>
    <property type="project" value="InterPro"/>
</dbReference>
<dbReference type="HAMAP" id="MF_00293">
    <property type="entry name" value="PSII_PsbN"/>
    <property type="match status" value="1"/>
</dbReference>
<dbReference type="InterPro" id="IPR003398">
    <property type="entry name" value="PSII_PsbN"/>
</dbReference>
<dbReference type="PANTHER" id="PTHR35326">
    <property type="entry name" value="PROTEIN PSBN"/>
    <property type="match status" value="1"/>
</dbReference>
<dbReference type="PANTHER" id="PTHR35326:SF3">
    <property type="entry name" value="PROTEIN PSBN"/>
    <property type="match status" value="1"/>
</dbReference>
<dbReference type="Pfam" id="PF02468">
    <property type="entry name" value="PsbN"/>
    <property type="match status" value="1"/>
</dbReference>
<feature type="chain" id="PRO_0000276277" description="Protein PsbN">
    <location>
        <begin position="1"/>
        <end position="43"/>
    </location>
</feature>
<feature type="transmembrane region" description="Helical" evidence="1">
    <location>
        <begin position="5"/>
        <end position="27"/>
    </location>
</feature>
<reference key="1">
    <citation type="journal article" date="2006" name="Mol. Biol. Evol.">
        <title>The chloroplast genome of Phalaenopsis aphrodite (Orchidaceae): comparative analysis of evolutionary rate with that of grasses and its phylogenetic implications.</title>
        <authorList>
            <person name="Chang C.-C."/>
            <person name="Lin H.-C."/>
            <person name="Lin I.-P."/>
            <person name="Chow T.-Y."/>
            <person name="Chen H.-H."/>
            <person name="Chen W.-H."/>
            <person name="Cheng C.-H."/>
            <person name="Lin C.-Y."/>
            <person name="Liu S.-M."/>
            <person name="Chang C.-C."/>
            <person name="Chaw S.-M."/>
        </authorList>
    </citation>
    <scope>NUCLEOTIDE SEQUENCE [LARGE SCALE GENOMIC DNA]</scope>
    <source>
        <strain>cv. Taisugar TS-97</strain>
    </source>
</reference>
<sequence length="43" mass="4662">METATLVAISISGLLVSFTGYALYTAFGQPSQKLRDPFEEHGD</sequence>
<keyword id="KW-0150">Chloroplast</keyword>
<keyword id="KW-0472">Membrane</keyword>
<keyword id="KW-0934">Plastid</keyword>
<keyword id="KW-0793">Thylakoid</keyword>
<keyword id="KW-0812">Transmembrane</keyword>
<keyword id="KW-1133">Transmembrane helix</keyword>
<protein>
    <recommendedName>
        <fullName evidence="1">Protein PsbN</fullName>
    </recommendedName>
</protein>
<proteinExistence type="inferred from homology"/>
<gene>
    <name evidence="1" type="primary">psbN</name>
</gene>
<evidence type="ECO:0000255" key="1">
    <source>
        <dbReference type="HAMAP-Rule" id="MF_00293"/>
    </source>
</evidence>
<geneLocation type="chloroplast"/>